<reference key="1">
    <citation type="journal article" date="2008" name="PLoS ONE">
        <title>Comparative analysis of Acinetobacters: three genomes for three lifestyles.</title>
        <authorList>
            <person name="Vallenet D."/>
            <person name="Nordmann P."/>
            <person name="Barbe V."/>
            <person name="Poirel L."/>
            <person name="Mangenot S."/>
            <person name="Bataille E."/>
            <person name="Dossat C."/>
            <person name="Gas S."/>
            <person name="Kreimeyer A."/>
            <person name="Lenoble P."/>
            <person name="Oztas S."/>
            <person name="Poulain J."/>
            <person name="Segurens B."/>
            <person name="Robert C."/>
            <person name="Abergel C."/>
            <person name="Claverie J.-M."/>
            <person name="Raoult D."/>
            <person name="Medigue C."/>
            <person name="Weissenbach J."/>
            <person name="Cruveiller S."/>
        </authorList>
    </citation>
    <scope>NUCLEOTIDE SEQUENCE [LARGE SCALE GENOMIC DNA]</scope>
    <source>
        <strain>SDF</strain>
    </source>
</reference>
<accession>B0VND0</accession>
<sequence>MIISSGNDYRAAAQRRLPPFLFHYIDGGAYAEYTLKRNVQDLSEIALRQRVLNDMSALSLETKLFNETLSMPVALAPVGLTGMYARRGEVQAAMAADKKGIPFTLSTVSVCPIEEVAPAINRPMWFQLYVLRDRGFMRNALERAKAAGCSTLVFTVDMPVPGARYRDAHSGMSGPNAAMRRYMQSVFHPHWSWNVGLMGRPHDLGNISKYLGKPTGLEDYIGWLGSNFDPSISWKDLEWIREFWDGPMVIKGILDPEDAKDAVRFGADGIVVSNHGGRQLDGVMSSARALPAIADAVKGDLAILADSGIRNGLDVVRMLALGADTVLLGRAFVYALAAAGGQGVSNLLDLIDKEMRVAMTLTGAKSISDINTDCLVQAIKQGL</sequence>
<comment type="function">
    <text evidence="1">Catalyzes the conversion of L-lactate to pyruvate. Is coupled to the respiratory chain.</text>
</comment>
<comment type="catalytic activity">
    <reaction evidence="1">
        <text>(S)-lactate + A = pyruvate + AH2</text>
        <dbReference type="Rhea" id="RHEA:45816"/>
        <dbReference type="ChEBI" id="CHEBI:13193"/>
        <dbReference type="ChEBI" id="CHEBI:15361"/>
        <dbReference type="ChEBI" id="CHEBI:16651"/>
        <dbReference type="ChEBI" id="CHEBI:17499"/>
    </reaction>
</comment>
<comment type="cofactor">
    <cofactor evidence="1">
        <name>FMN</name>
        <dbReference type="ChEBI" id="CHEBI:58210"/>
    </cofactor>
</comment>
<comment type="subcellular location">
    <subcellularLocation>
        <location evidence="1">Cell inner membrane</location>
        <topology evidence="1">Peripheral membrane protein</topology>
    </subcellularLocation>
</comment>
<comment type="similarity">
    <text evidence="1">Belongs to the FMN-dependent alpha-hydroxy acid dehydrogenase family.</text>
</comment>
<evidence type="ECO:0000255" key="1">
    <source>
        <dbReference type="HAMAP-Rule" id="MF_01559"/>
    </source>
</evidence>
<name>LLDD_ACIBS</name>
<protein>
    <recommendedName>
        <fullName evidence="1">L-lactate dehydrogenase</fullName>
        <ecNumber evidence="1">1.1.-.-</ecNumber>
    </recommendedName>
</protein>
<dbReference type="EC" id="1.1.-.-" evidence="1"/>
<dbReference type="EMBL" id="CU468230">
    <property type="protein sequence ID" value="CAO99500.1"/>
    <property type="molecule type" value="Genomic_DNA"/>
</dbReference>
<dbReference type="SMR" id="B0VND0"/>
<dbReference type="KEGG" id="abm:ABSDF0087"/>
<dbReference type="HOGENOM" id="CLU_020639_0_0_6"/>
<dbReference type="Proteomes" id="UP000001741">
    <property type="component" value="Chromosome"/>
</dbReference>
<dbReference type="GO" id="GO:0005886">
    <property type="term" value="C:plasma membrane"/>
    <property type="evidence" value="ECO:0007669"/>
    <property type="project" value="UniProtKB-SubCell"/>
</dbReference>
<dbReference type="GO" id="GO:0010181">
    <property type="term" value="F:FMN binding"/>
    <property type="evidence" value="ECO:0007669"/>
    <property type="project" value="InterPro"/>
</dbReference>
<dbReference type="GO" id="GO:0004459">
    <property type="term" value="F:L-lactate dehydrogenase activity"/>
    <property type="evidence" value="ECO:0007669"/>
    <property type="project" value="UniProtKB-UniRule"/>
</dbReference>
<dbReference type="GO" id="GO:0009060">
    <property type="term" value="P:aerobic respiration"/>
    <property type="evidence" value="ECO:0007669"/>
    <property type="project" value="TreeGrafter"/>
</dbReference>
<dbReference type="GO" id="GO:0006089">
    <property type="term" value="P:lactate metabolic process"/>
    <property type="evidence" value="ECO:0007669"/>
    <property type="project" value="UniProtKB-UniRule"/>
</dbReference>
<dbReference type="CDD" id="cd02809">
    <property type="entry name" value="alpha_hydroxyacid_oxid_FMN"/>
    <property type="match status" value="1"/>
</dbReference>
<dbReference type="FunFam" id="3.20.20.70:FF:000029">
    <property type="entry name" value="L-lactate dehydrogenase"/>
    <property type="match status" value="1"/>
</dbReference>
<dbReference type="Gene3D" id="3.20.20.70">
    <property type="entry name" value="Aldolase class I"/>
    <property type="match status" value="1"/>
</dbReference>
<dbReference type="HAMAP" id="MF_01559">
    <property type="entry name" value="L_lact_dehydr"/>
    <property type="match status" value="1"/>
</dbReference>
<dbReference type="InterPro" id="IPR013785">
    <property type="entry name" value="Aldolase_TIM"/>
</dbReference>
<dbReference type="InterPro" id="IPR012133">
    <property type="entry name" value="Alpha-hydoxy_acid_DH_FMN"/>
</dbReference>
<dbReference type="InterPro" id="IPR000262">
    <property type="entry name" value="FMN-dep_DH"/>
</dbReference>
<dbReference type="InterPro" id="IPR037396">
    <property type="entry name" value="FMN_HAD"/>
</dbReference>
<dbReference type="InterPro" id="IPR008259">
    <property type="entry name" value="FMN_hydac_DH_AS"/>
</dbReference>
<dbReference type="InterPro" id="IPR020920">
    <property type="entry name" value="LldD"/>
</dbReference>
<dbReference type="NCBIfam" id="NF033901">
    <property type="entry name" value="L_lactate_LldD"/>
    <property type="match status" value="1"/>
</dbReference>
<dbReference type="NCBIfam" id="NF008398">
    <property type="entry name" value="PRK11197.1"/>
    <property type="match status" value="1"/>
</dbReference>
<dbReference type="PANTHER" id="PTHR10578:SF85">
    <property type="entry name" value="L-LACTATE DEHYDROGENASE"/>
    <property type="match status" value="1"/>
</dbReference>
<dbReference type="PANTHER" id="PTHR10578">
    <property type="entry name" value="S -2-HYDROXY-ACID OXIDASE-RELATED"/>
    <property type="match status" value="1"/>
</dbReference>
<dbReference type="Pfam" id="PF01070">
    <property type="entry name" value="FMN_dh"/>
    <property type="match status" value="1"/>
</dbReference>
<dbReference type="PIRSF" id="PIRSF000138">
    <property type="entry name" value="Al-hdrx_acd_dh"/>
    <property type="match status" value="1"/>
</dbReference>
<dbReference type="SUPFAM" id="SSF51395">
    <property type="entry name" value="FMN-linked oxidoreductases"/>
    <property type="match status" value="1"/>
</dbReference>
<dbReference type="PROSITE" id="PS00557">
    <property type="entry name" value="FMN_HYDROXY_ACID_DH_1"/>
    <property type="match status" value="1"/>
</dbReference>
<dbReference type="PROSITE" id="PS51349">
    <property type="entry name" value="FMN_HYDROXY_ACID_DH_2"/>
    <property type="match status" value="1"/>
</dbReference>
<feature type="chain" id="PRO_0000383409" description="L-lactate dehydrogenase">
    <location>
        <begin position="1"/>
        <end position="383"/>
    </location>
</feature>
<feature type="domain" description="FMN hydroxy acid dehydrogenase" evidence="1">
    <location>
        <begin position="1"/>
        <end position="380"/>
    </location>
</feature>
<feature type="active site" description="Proton acceptor" evidence="1">
    <location>
        <position position="275"/>
    </location>
</feature>
<feature type="binding site" evidence="1">
    <location>
        <position position="24"/>
    </location>
    <ligand>
        <name>substrate</name>
    </ligand>
</feature>
<feature type="binding site" evidence="1">
    <location>
        <position position="106"/>
    </location>
    <ligand>
        <name>FMN</name>
        <dbReference type="ChEBI" id="CHEBI:58210"/>
    </ligand>
</feature>
<feature type="binding site" evidence="1">
    <location>
        <position position="127"/>
    </location>
    <ligand>
        <name>FMN</name>
        <dbReference type="ChEBI" id="CHEBI:58210"/>
    </ligand>
</feature>
<feature type="binding site" evidence="1">
    <location>
        <position position="129"/>
    </location>
    <ligand>
        <name>substrate</name>
    </ligand>
</feature>
<feature type="binding site" evidence="1">
    <location>
        <position position="155"/>
    </location>
    <ligand>
        <name>FMN</name>
        <dbReference type="ChEBI" id="CHEBI:58210"/>
    </ligand>
</feature>
<feature type="binding site" evidence="1">
    <location>
        <position position="164"/>
    </location>
    <ligand>
        <name>substrate</name>
    </ligand>
</feature>
<feature type="binding site" evidence="1">
    <location>
        <position position="251"/>
    </location>
    <ligand>
        <name>FMN</name>
        <dbReference type="ChEBI" id="CHEBI:58210"/>
    </ligand>
</feature>
<feature type="binding site" evidence="1">
    <location>
        <position position="278"/>
    </location>
    <ligand>
        <name>substrate</name>
    </ligand>
</feature>
<feature type="binding site" evidence="1">
    <location>
        <begin position="306"/>
        <end position="330"/>
    </location>
    <ligand>
        <name>FMN</name>
        <dbReference type="ChEBI" id="CHEBI:58210"/>
    </ligand>
</feature>
<keyword id="KW-0997">Cell inner membrane</keyword>
<keyword id="KW-1003">Cell membrane</keyword>
<keyword id="KW-0285">Flavoprotein</keyword>
<keyword id="KW-0288">FMN</keyword>
<keyword id="KW-0472">Membrane</keyword>
<keyword id="KW-0560">Oxidoreductase</keyword>
<organism>
    <name type="scientific">Acinetobacter baumannii (strain SDF)</name>
    <dbReference type="NCBI Taxonomy" id="509170"/>
    <lineage>
        <taxon>Bacteria</taxon>
        <taxon>Pseudomonadati</taxon>
        <taxon>Pseudomonadota</taxon>
        <taxon>Gammaproteobacteria</taxon>
        <taxon>Moraxellales</taxon>
        <taxon>Moraxellaceae</taxon>
        <taxon>Acinetobacter</taxon>
        <taxon>Acinetobacter calcoaceticus/baumannii complex</taxon>
    </lineage>
</organism>
<gene>
    <name evidence="1" type="primary">lldD</name>
    <name type="ordered locus">ABSDF0087</name>
</gene>
<proteinExistence type="inferred from homology"/>